<accession>B7NH28</accession>
<sequence>MSELLSFALFLASVLIYAWKAGRNTWWFAATLTVLGLFVVLNITLFASDYFTGDGINDAVLYTLTNSLTGAGVSKYILPGIGIVLGLTAVFGALGWILRRRRHHPHHFGYSLLALLLALGSVDASPAFRQITELVKSQSRDGDPDFAAYYKEPSKTIPDPKLNLVYIYGESLERTYFDNEAFPDLTPELGALKNEGLDFSHTQQLPGTDYTIAGMVASQCGIPLFAPFEGNASASVSSFFPQNICLGDILKNSGYQNYFVQGANLRFAGKDVFLKSHGFDHLYGSEELKSVVADPHYRNDWGFYDDTVLDEAWKKFEELSRSGQRFSLFTLTVDTHHPDGFISRTCNRKKYDFDGKPNQSFSAVSCSQENIATFINKIKASPWFKDTVIVVSSDHLAMNNTAWKYLNKQDRNNLFFVIRGDKPQQETLAVKRNTMDNGATVLDILGGDNYLGLGRSSLSGQSMSEIFLNIKEKTLAWKPDIIRLWKFPKEMKEFTIDQQKNMIAFSGSHFRLPLLLRVSDKRVEPLPESEYSAPLRFQLADFAPRDNFVWVDRCYKMAQLWAPELALSTDWCVSQGQLGGQQIVQHVDKTTWKGKTAFKDTVIDMARYKGNVDTLKIVDNDIRYKADSFIFNVAGAPEEVKQFSGISRPESWGRWSNAQLGDEVKIEYKHPLPKKFDLVITAKAYGNNASRPIPVRVGNEEQTLVLGNEVTTTTLHFDNPTDADTLVIVPPEPVSTNEGNILGHSPRKLGIGMVEIKVVEREG</sequence>
<organism>
    <name type="scientific">Escherichia coli O17:K52:H18 (strain UMN026 / ExPEC)</name>
    <dbReference type="NCBI Taxonomy" id="585056"/>
    <lineage>
        <taxon>Bacteria</taxon>
        <taxon>Pseudomonadati</taxon>
        <taxon>Pseudomonadota</taxon>
        <taxon>Gammaproteobacteria</taxon>
        <taxon>Enterobacterales</taxon>
        <taxon>Enterobacteriaceae</taxon>
        <taxon>Escherichia</taxon>
    </lineage>
</organism>
<feature type="chain" id="PRO_1000136624" description="Phosphoglycerol transferase I">
    <location>
        <begin position="1"/>
        <end position="763"/>
    </location>
</feature>
<feature type="transmembrane region" description="Helical" evidence="1">
    <location>
        <begin position="1"/>
        <end position="21"/>
    </location>
</feature>
<feature type="transmembrane region" description="Helical" evidence="1">
    <location>
        <begin position="26"/>
        <end position="46"/>
    </location>
</feature>
<feature type="transmembrane region" description="Helical" evidence="1">
    <location>
        <begin position="77"/>
        <end position="97"/>
    </location>
</feature>
<feature type="transmembrane region" description="Helical" evidence="1">
    <location>
        <begin position="108"/>
        <end position="128"/>
    </location>
</feature>
<protein>
    <recommendedName>
        <fullName evidence="1">Phosphoglycerol transferase I</fullName>
        <ecNumber evidence="1">2.7.8.20</ecNumber>
    </recommendedName>
    <alternativeName>
        <fullName evidence="1">Phosphatidylglycerol--membrane-oligosaccharide glycerophosphotransferase</fullName>
    </alternativeName>
</protein>
<name>OPGB_ECOLU</name>
<proteinExistence type="inferred from homology"/>
<evidence type="ECO:0000255" key="1">
    <source>
        <dbReference type="HAMAP-Rule" id="MF_01070"/>
    </source>
</evidence>
<comment type="function">
    <text evidence="1">Transfers a phosphoglycerol residue from phosphatidylglycerol to the membrane-bound nascent glucan backbones.</text>
</comment>
<comment type="catalytic activity">
    <reaction evidence="1">
        <text>a phosphatidylglycerol + a membrane-derived-oligosaccharide D-glucose = a 1,2-diacyl-sn-glycerol + a membrane-derived-oligosaccharide 6-(glycerophospho)-D-glucose.</text>
        <dbReference type="EC" id="2.7.8.20"/>
    </reaction>
</comment>
<comment type="pathway">
    <text evidence="1">Glycan metabolism; osmoregulated periplasmic glucan (OPG) biosynthesis.</text>
</comment>
<comment type="subcellular location">
    <subcellularLocation>
        <location evidence="1">Cell inner membrane</location>
        <topology evidence="1">Multi-pass membrane protein</topology>
    </subcellularLocation>
</comment>
<comment type="similarity">
    <text evidence="1">Belongs to the OpgB family.</text>
</comment>
<keyword id="KW-0997">Cell inner membrane</keyword>
<keyword id="KW-1003">Cell membrane</keyword>
<keyword id="KW-0472">Membrane</keyword>
<keyword id="KW-0808">Transferase</keyword>
<keyword id="KW-0812">Transmembrane</keyword>
<keyword id="KW-1133">Transmembrane helix</keyword>
<dbReference type="EC" id="2.7.8.20" evidence="1"/>
<dbReference type="EMBL" id="CU928163">
    <property type="protein sequence ID" value="CAR16093.1"/>
    <property type="molecule type" value="Genomic_DNA"/>
</dbReference>
<dbReference type="RefSeq" id="WP_001292674.1">
    <property type="nucleotide sequence ID" value="NC_011751.1"/>
</dbReference>
<dbReference type="RefSeq" id="YP_002415557.1">
    <property type="nucleotide sequence ID" value="NC_011751.1"/>
</dbReference>
<dbReference type="SMR" id="B7NH28"/>
<dbReference type="STRING" id="585056.ECUMN_4982"/>
<dbReference type="KEGG" id="eum:ECUMN_4982"/>
<dbReference type="PATRIC" id="fig|585056.7.peg.5147"/>
<dbReference type="HOGENOM" id="CLU_023986_1_0_6"/>
<dbReference type="UniPathway" id="UPA00637"/>
<dbReference type="Proteomes" id="UP000007097">
    <property type="component" value="Chromosome"/>
</dbReference>
<dbReference type="GO" id="GO:0005886">
    <property type="term" value="C:plasma membrane"/>
    <property type="evidence" value="ECO:0007669"/>
    <property type="project" value="UniProtKB-SubCell"/>
</dbReference>
<dbReference type="GO" id="GO:0008960">
    <property type="term" value="F:phosphatidylglycerol-membrane-oligosaccharide glycerophosphotransferase activity"/>
    <property type="evidence" value="ECO:0007669"/>
    <property type="project" value="UniProtKB-UniRule"/>
</dbReference>
<dbReference type="GO" id="GO:0009250">
    <property type="term" value="P:glucan biosynthetic process"/>
    <property type="evidence" value="ECO:0007669"/>
    <property type="project" value="UniProtKB-UniRule"/>
</dbReference>
<dbReference type="CDD" id="cd16015">
    <property type="entry name" value="LTA_synthase"/>
    <property type="match status" value="1"/>
</dbReference>
<dbReference type="FunFam" id="3.40.720.10:FF:000009">
    <property type="entry name" value="Phosphoglycerol transferase I"/>
    <property type="match status" value="1"/>
</dbReference>
<dbReference type="Gene3D" id="3.40.720.10">
    <property type="entry name" value="Alkaline Phosphatase, subunit A"/>
    <property type="match status" value="1"/>
</dbReference>
<dbReference type="HAMAP" id="MF_01070">
    <property type="entry name" value="MdoB_OpgB"/>
    <property type="match status" value="1"/>
</dbReference>
<dbReference type="InterPro" id="IPR017850">
    <property type="entry name" value="Alkaline_phosphatase_core_sf"/>
</dbReference>
<dbReference type="InterPro" id="IPR054288">
    <property type="entry name" value="DUF7024"/>
</dbReference>
<dbReference type="InterPro" id="IPR020881">
    <property type="entry name" value="OpgB"/>
</dbReference>
<dbReference type="InterPro" id="IPR050448">
    <property type="entry name" value="OpgB/LTA_synthase_biosynth"/>
</dbReference>
<dbReference type="InterPro" id="IPR000917">
    <property type="entry name" value="Sulfatase_N"/>
</dbReference>
<dbReference type="NCBIfam" id="NF003000">
    <property type="entry name" value="PRK03776.1"/>
    <property type="match status" value="1"/>
</dbReference>
<dbReference type="PANTHER" id="PTHR47371">
    <property type="entry name" value="LIPOTEICHOIC ACID SYNTHASE"/>
    <property type="match status" value="1"/>
</dbReference>
<dbReference type="PANTHER" id="PTHR47371:SF3">
    <property type="entry name" value="PHOSPHOGLYCEROL TRANSFERASE I"/>
    <property type="match status" value="1"/>
</dbReference>
<dbReference type="Pfam" id="PF22895">
    <property type="entry name" value="DUF7024"/>
    <property type="match status" value="1"/>
</dbReference>
<dbReference type="Pfam" id="PF00884">
    <property type="entry name" value="Sulfatase"/>
    <property type="match status" value="1"/>
</dbReference>
<dbReference type="SUPFAM" id="SSF53649">
    <property type="entry name" value="Alkaline phosphatase-like"/>
    <property type="match status" value="1"/>
</dbReference>
<gene>
    <name evidence="1" type="primary">mdoB</name>
    <name evidence="1" type="synonym">opgB</name>
    <name type="ordered locus">ECUMN_4982</name>
</gene>
<reference key="1">
    <citation type="journal article" date="2009" name="PLoS Genet.">
        <title>Organised genome dynamics in the Escherichia coli species results in highly diverse adaptive paths.</title>
        <authorList>
            <person name="Touchon M."/>
            <person name="Hoede C."/>
            <person name="Tenaillon O."/>
            <person name="Barbe V."/>
            <person name="Baeriswyl S."/>
            <person name="Bidet P."/>
            <person name="Bingen E."/>
            <person name="Bonacorsi S."/>
            <person name="Bouchier C."/>
            <person name="Bouvet O."/>
            <person name="Calteau A."/>
            <person name="Chiapello H."/>
            <person name="Clermont O."/>
            <person name="Cruveiller S."/>
            <person name="Danchin A."/>
            <person name="Diard M."/>
            <person name="Dossat C."/>
            <person name="Karoui M.E."/>
            <person name="Frapy E."/>
            <person name="Garry L."/>
            <person name="Ghigo J.M."/>
            <person name="Gilles A.M."/>
            <person name="Johnson J."/>
            <person name="Le Bouguenec C."/>
            <person name="Lescat M."/>
            <person name="Mangenot S."/>
            <person name="Martinez-Jehanne V."/>
            <person name="Matic I."/>
            <person name="Nassif X."/>
            <person name="Oztas S."/>
            <person name="Petit M.A."/>
            <person name="Pichon C."/>
            <person name="Rouy Z."/>
            <person name="Ruf C.S."/>
            <person name="Schneider D."/>
            <person name="Tourret J."/>
            <person name="Vacherie B."/>
            <person name="Vallenet D."/>
            <person name="Medigue C."/>
            <person name="Rocha E.P.C."/>
            <person name="Denamur E."/>
        </authorList>
    </citation>
    <scope>NUCLEOTIDE SEQUENCE [LARGE SCALE GENOMIC DNA]</scope>
    <source>
        <strain>UMN026 / ExPEC</strain>
    </source>
</reference>